<name>PYRB_PSYA2</name>
<reference key="1">
    <citation type="journal article" date="2010" name="Appl. Environ. Microbiol.">
        <title>The genome sequence of Psychrobacter arcticus 273-4, a psychroactive Siberian permafrost bacterium, reveals mechanisms for adaptation to low-temperature growth.</title>
        <authorList>
            <person name="Ayala-del-Rio H.L."/>
            <person name="Chain P.S."/>
            <person name="Grzymski J.J."/>
            <person name="Ponder M.A."/>
            <person name="Ivanova N."/>
            <person name="Bergholz P.W."/>
            <person name="Di Bartolo G."/>
            <person name="Hauser L."/>
            <person name="Land M."/>
            <person name="Bakermans C."/>
            <person name="Rodrigues D."/>
            <person name="Klappenbach J."/>
            <person name="Zarka D."/>
            <person name="Larimer F."/>
            <person name="Richardson P."/>
            <person name="Murray A."/>
            <person name="Thomashow M."/>
            <person name="Tiedje J.M."/>
        </authorList>
    </citation>
    <scope>NUCLEOTIDE SEQUENCE [LARGE SCALE GENOMIC DNA]</scope>
    <source>
        <strain>DSM 17307 / VKM B-2377 / 273-4</strain>
    </source>
</reference>
<proteinExistence type="inferred from homology"/>
<sequence>MSNSIDSQSIPTISPTDYTKFDPDTIHEKLDASLSRPQLNTDGSIRHFLGIEGLNKAQLRAIIAKAETFFDDKGQLINRPELEGYTVMNLFFEPSTRTRTTFEVAEKRLGANVLNIDIERSSTKKGESLRDTLWNLQAMTADIFVVRHSASGAAHFMATEVTPDIAIINGGDGWHAHPTQGMLDMLTIHREAPRPFEELSVAIVGDIKHSRVARSDISALQTLGVKDIRVCAPRTLLPKGIERFGVQVYENMNECVTDCDVIMGLRIQNERIGSPLLASSSEYYKHYGITPERMALAKPDAFVMHPGPMNRGVEIASSVADGAQSVILKQVNNGIAIRMAVLSLAMEGQRAHQAAGN</sequence>
<comment type="function">
    <text evidence="1">Catalyzes the condensation of carbamoyl phosphate and aspartate to form carbamoyl aspartate and inorganic phosphate, the committed step in the de novo pyrimidine nucleotide biosynthesis pathway.</text>
</comment>
<comment type="catalytic activity">
    <reaction evidence="1">
        <text>carbamoyl phosphate + L-aspartate = N-carbamoyl-L-aspartate + phosphate + H(+)</text>
        <dbReference type="Rhea" id="RHEA:20013"/>
        <dbReference type="ChEBI" id="CHEBI:15378"/>
        <dbReference type="ChEBI" id="CHEBI:29991"/>
        <dbReference type="ChEBI" id="CHEBI:32814"/>
        <dbReference type="ChEBI" id="CHEBI:43474"/>
        <dbReference type="ChEBI" id="CHEBI:58228"/>
        <dbReference type="EC" id="2.1.3.2"/>
    </reaction>
</comment>
<comment type="pathway">
    <text evidence="1">Pyrimidine metabolism; UMP biosynthesis via de novo pathway; (S)-dihydroorotate from bicarbonate: step 2/3.</text>
</comment>
<comment type="subunit">
    <text evidence="1">Heterododecamer (2C3:3R2) of six catalytic PyrB chains organized as two trimers (C3), and six regulatory PyrI chains organized as three dimers (R2).</text>
</comment>
<comment type="similarity">
    <text evidence="1">Belongs to the aspartate/ornithine carbamoyltransferase superfamily. ATCase family.</text>
</comment>
<organism>
    <name type="scientific">Psychrobacter arcticus (strain DSM 17307 / VKM B-2377 / 273-4)</name>
    <dbReference type="NCBI Taxonomy" id="259536"/>
    <lineage>
        <taxon>Bacteria</taxon>
        <taxon>Pseudomonadati</taxon>
        <taxon>Pseudomonadota</taxon>
        <taxon>Gammaproteobacteria</taxon>
        <taxon>Moraxellales</taxon>
        <taxon>Moraxellaceae</taxon>
        <taxon>Psychrobacter</taxon>
    </lineage>
</organism>
<evidence type="ECO:0000255" key="1">
    <source>
        <dbReference type="HAMAP-Rule" id="MF_00001"/>
    </source>
</evidence>
<evidence type="ECO:0000256" key="2">
    <source>
        <dbReference type="SAM" id="MobiDB-lite"/>
    </source>
</evidence>
<protein>
    <recommendedName>
        <fullName evidence="1">Aspartate carbamoyltransferase catalytic subunit</fullName>
        <ecNumber evidence="1">2.1.3.2</ecNumber>
    </recommendedName>
    <alternativeName>
        <fullName evidence="1">Aspartate transcarbamylase</fullName>
        <shortName evidence="1">ATCase</shortName>
    </alternativeName>
</protein>
<gene>
    <name evidence="1" type="primary">pyrB</name>
    <name type="ordered locus">Psyc_0542</name>
</gene>
<feature type="chain" id="PRO_0000329113" description="Aspartate carbamoyltransferase catalytic subunit">
    <location>
        <begin position="1"/>
        <end position="357"/>
    </location>
</feature>
<feature type="region of interest" description="Disordered" evidence="2">
    <location>
        <begin position="1"/>
        <end position="21"/>
    </location>
</feature>
<feature type="compositionally biased region" description="Polar residues" evidence="2">
    <location>
        <begin position="1"/>
        <end position="17"/>
    </location>
</feature>
<feature type="binding site" evidence="1">
    <location>
        <position position="97"/>
    </location>
    <ligand>
        <name>carbamoyl phosphate</name>
        <dbReference type="ChEBI" id="CHEBI:58228"/>
    </ligand>
</feature>
<feature type="binding site" evidence="1">
    <location>
        <position position="98"/>
    </location>
    <ligand>
        <name>carbamoyl phosphate</name>
        <dbReference type="ChEBI" id="CHEBI:58228"/>
    </ligand>
</feature>
<feature type="binding site" evidence="1">
    <location>
        <position position="125"/>
    </location>
    <ligand>
        <name>L-aspartate</name>
        <dbReference type="ChEBI" id="CHEBI:29991"/>
    </ligand>
</feature>
<feature type="binding site" evidence="1">
    <location>
        <position position="147"/>
    </location>
    <ligand>
        <name>carbamoyl phosphate</name>
        <dbReference type="ChEBI" id="CHEBI:58228"/>
    </ligand>
</feature>
<feature type="binding site" evidence="1">
    <location>
        <position position="177"/>
    </location>
    <ligand>
        <name>carbamoyl phosphate</name>
        <dbReference type="ChEBI" id="CHEBI:58228"/>
    </ligand>
</feature>
<feature type="binding site" evidence="1">
    <location>
        <position position="180"/>
    </location>
    <ligand>
        <name>carbamoyl phosphate</name>
        <dbReference type="ChEBI" id="CHEBI:58228"/>
    </ligand>
</feature>
<feature type="binding site" evidence="1">
    <location>
        <position position="211"/>
    </location>
    <ligand>
        <name>L-aspartate</name>
        <dbReference type="ChEBI" id="CHEBI:29991"/>
    </ligand>
</feature>
<feature type="binding site" evidence="1">
    <location>
        <position position="266"/>
    </location>
    <ligand>
        <name>L-aspartate</name>
        <dbReference type="ChEBI" id="CHEBI:29991"/>
    </ligand>
</feature>
<feature type="binding site" evidence="1">
    <location>
        <position position="307"/>
    </location>
    <ligand>
        <name>carbamoyl phosphate</name>
        <dbReference type="ChEBI" id="CHEBI:58228"/>
    </ligand>
</feature>
<feature type="binding site" evidence="1">
    <location>
        <position position="308"/>
    </location>
    <ligand>
        <name>carbamoyl phosphate</name>
        <dbReference type="ChEBI" id="CHEBI:58228"/>
    </ligand>
</feature>
<dbReference type="EC" id="2.1.3.2" evidence="1"/>
<dbReference type="EMBL" id="CP000082">
    <property type="protein sequence ID" value="AAZ18403.1"/>
    <property type="molecule type" value="Genomic_DNA"/>
</dbReference>
<dbReference type="RefSeq" id="WP_011279833.1">
    <property type="nucleotide sequence ID" value="NC_007204.1"/>
</dbReference>
<dbReference type="SMR" id="Q4FUA5"/>
<dbReference type="STRING" id="259536.Psyc_0542"/>
<dbReference type="KEGG" id="par:Psyc_0542"/>
<dbReference type="eggNOG" id="COG0540">
    <property type="taxonomic scope" value="Bacteria"/>
</dbReference>
<dbReference type="HOGENOM" id="CLU_043846_2_0_6"/>
<dbReference type="OrthoDB" id="9774690at2"/>
<dbReference type="UniPathway" id="UPA00070">
    <property type="reaction ID" value="UER00116"/>
</dbReference>
<dbReference type="Proteomes" id="UP000000546">
    <property type="component" value="Chromosome"/>
</dbReference>
<dbReference type="GO" id="GO:0005829">
    <property type="term" value="C:cytosol"/>
    <property type="evidence" value="ECO:0007669"/>
    <property type="project" value="TreeGrafter"/>
</dbReference>
<dbReference type="GO" id="GO:0016597">
    <property type="term" value="F:amino acid binding"/>
    <property type="evidence" value="ECO:0007669"/>
    <property type="project" value="InterPro"/>
</dbReference>
<dbReference type="GO" id="GO:0004070">
    <property type="term" value="F:aspartate carbamoyltransferase activity"/>
    <property type="evidence" value="ECO:0007669"/>
    <property type="project" value="UniProtKB-UniRule"/>
</dbReference>
<dbReference type="GO" id="GO:0006207">
    <property type="term" value="P:'de novo' pyrimidine nucleobase biosynthetic process"/>
    <property type="evidence" value="ECO:0007669"/>
    <property type="project" value="InterPro"/>
</dbReference>
<dbReference type="GO" id="GO:0044205">
    <property type="term" value="P:'de novo' UMP biosynthetic process"/>
    <property type="evidence" value="ECO:0007669"/>
    <property type="project" value="UniProtKB-UniRule"/>
</dbReference>
<dbReference type="GO" id="GO:0006520">
    <property type="term" value="P:amino acid metabolic process"/>
    <property type="evidence" value="ECO:0007669"/>
    <property type="project" value="InterPro"/>
</dbReference>
<dbReference type="FunFam" id="3.40.50.1370:FF:000007">
    <property type="entry name" value="Aspartate carbamoyltransferase"/>
    <property type="match status" value="1"/>
</dbReference>
<dbReference type="Gene3D" id="3.40.50.1370">
    <property type="entry name" value="Aspartate/ornithine carbamoyltransferase"/>
    <property type="match status" value="2"/>
</dbReference>
<dbReference type="HAMAP" id="MF_00001">
    <property type="entry name" value="Asp_carb_tr"/>
    <property type="match status" value="1"/>
</dbReference>
<dbReference type="InterPro" id="IPR006132">
    <property type="entry name" value="Asp/Orn_carbamoyltranf_P-bd"/>
</dbReference>
<dbReference type="InterPro" id="IPR006130">
    <property type="entry name" value="Asp/Orn_carbamoylTrfase"/>
</dbReference>
<dbReference type="InterPro" id="IPR036901">
    <property type="entry name" value="Asp/Orn_carbamoylTrfase_sf"/>
</dbReference>
<dbReference type="InterPro" id="IPR002082">
    <property type="entry name" value="Asp_carbamoyltransf"/>
</dbReference>
<dbReference type="InterPro" id="IPR006131">
    <property type="entry name" value="Asp_carbamoyltransf_Asp/Orn-bd"/>
</dbReference>
<dbReference type="NCBIfam" id="TIGR00670">
    <property type="entry name" value="asp_carb_tr"/>
    <property type="match status" value="1"/>
</dbReference>
<dbReference type="NCBIfam" id="NF002032">
    <property type="entry name" value="PRK00856.1"/>
    <property type="match status" value="1"/>
</dbReference>
<dbReference type="PANTHER" id="PTHR45753:SF6">
    <property type="entry name" value="ASPARTATE CARBAMOYLTRANSFERASE"/>
    <property type="match status" value="1"/>
</dbReference>
<dbReference type="PANTHER" id="PTHR45753">
    <property type="entry name" value="ORNITHINE CARBAMOYLTRANSFERASE, MITOCHONDRIAL"/>
    <property type="match status" value="1"/>
</dbReference>
<dbReference type="Pfam" id="PF00185">
    <property type="entry name" value="OTCace"/>
    <property type="match status" value="1"/>
</dbReference>
<dbReference type="Pfam" id="PF02729">
    <property type="entry name" value="OTCace_N"/>
    <property type="match status" value="1"/>
</dbReference>
<dbReference type="PRINTS" id="PR00100">
    <property type="entry name" value="AOTCASE"/>
</dbReference>
<dbReference type="PRINTS" id="PR00101">
    <property type="entry name" value="ATCASE"/>
</dbReference>
<dbReference type="SUPFAM" id="SSF53671">
    <property type="entry name" value="Aspartate/ornithine carbamoyltransferase"/>
    <property type="match status" value="1"/>
</dbReference>
<dbReference type="PROSITE" id="PS00097">
    <property type="entry name" value="CARBAMOYLTRANSFERASE"/>
    <property type="match status" value="1"/>
</dbReference>
<keyword id="KW-0665">Pyrimidine biosynthesis</keyword>
<keyword id="KW-1185">Reference proteome</keyword>
<keyword id="KW-0808">Transferase</keyword>
<accession>Q4FUA5</accession>